<proteinExistence type="inferred from homology"/>
<evidence type="ECO:0000255" key="1">
    <source>
        <dbReference type="HAMAP-Rule" id="MF_00735"/>
    </source>
</evidence>
<sequence length="296" mass="32986">MAWIQLRLNSTNEKAEKISEYLEEIGAVSVTFMDSQDTPIFEPLPGETRLWGNTDVIALFDAKTNMQQIVRLLQQKNHLDENTAYKIEQIEDKDWEREWMDNFHPMKFGKRLWICPSWREIPDENAINVMLDPGLAFGTGTHPTTALCLEWLDSLDLTGKTVIDFGCGSGILAIAALKLGAKSAVGIDIDPQAILASYNNAEQNGVAERLQLFLSEEKPTDLQADVVIANILAGPLKELYPIISNLVKPQGDLGLSGILSTQADSVCEAYQGKFTLDPITEREEWCRITGKLNSFV</sequence>
<keyword id="KW-0963">Cytoplasm</keyword>
<keyword id="KW-0489">Methyltransferase</keyword>
<keyword id="KW-0949">S-adenosyl-L-methionine</keyword>
<keyword id="KW-0808">Transferase</keyword>
<dbReference type="EC" id="2.1.1.-" evidence="1"/>
<dbReference type="EMBL" id="CP000947">
    <property type="protein sequence ID" value="ACA31372.1"/>
    <property type="molecule type" value="Genomic_DNA"/>
</dbReference>
<dbReference type="RefSeq" id="WP_012340738.1">
    <property type="nucleotide sequence ID" value="NC_010519.1"/>
</dbReference>
<dbReference type="SMR" id="B0UV84"/>
<dbReference type="STRING" id="228400.HSM_1608"/>
<dbReference type="GeneID" id="31487912"/>
<dbReference type="KEGG" id="hsm:HSM_1608"/>
<dbReference type="HOGENOM" id="CLU_049382_4_1_6"/>
<dbReference type="GO" id="GO:0005829">
    <property type="term" value="C:cytosol"/>
    <property type="evidence" value="ECO:0007669"/>
    <property type="project" value="TreeGrafter"/>
</dbReference>
<dbReference type="GO" id="GO:0016279">
    <property type="term" value="F:protein-lysine N-methyltransferase activity"/>
    <property type="evidence" value="ECO:0007669"/>
    <property type="project" value="TreeGrafter"/>
</dbReference>
<dbReference type="GO" id="GO:0032259">
    <property type="term" value="P:methylation"/>
    <property type="evidence" value="ECO:0007669"/>
    <property type="project" value="UniProtKB-KW"/>
</dbReference>
<dbReference type="CDD" id="cd02440">
    <property type="entry name" value="AdoMet_MTases"/>
    <property type="match status" value="1"/>
</dbReference>
<dbReference type="Gene3D" id="3.40.50.150">
    <property type="entry name" value="Vaccinia Virus protein VP39"/>
    <property type="match status" value="1"/>
</dbReference>
<dbReference type="HAMAP" id="MF_00735">
    <property type="entry name" value="Methyltr_PrmA"/>
    <property type="match status" value="1"/>
</dbReference>
<dbReference type="InterPro" id="IPR050078">
    <property type="entry name" value="Ribosomal_L11_MeTrfase_PrmA"/>
</dbReference>
<dbReference type="InterPro" id="IPR004498">
    <property type="entry name" value="Ribosomal_PrmA_MeTrfase"/>
</dbReference>
<dbReference type="InterPro" id="IPR029063">
    <property type="entry name" value="SAM-dependent_MTases_sf"/>
</dbReference>
<dbReference type="NCBIfam" id="TIGR00406">
    <property type="entry name" value="prmA"/>
    <property type="match status" value="1"/>
</dbReference>
<dbReference type="PANTHER" id="PTHR43648">
    <property type="entry name" value="ELECTRON TRANSFER FLAVOPROTEIN BETA SUBUNIT LYSINE METHYLTRANSFERASE"/>
    <property type="match status" value="1"/>
</dbReference>
<dbReference type="PANTHER" id="PTHR43648:SF1">
    <property type="entry name" value="ELECTRON TRANSFER FLAVOPROTEIN BETA SUBUNIT LYSINE METHYLTRANSFERASE"/>
    <property type="match status" value="1"/>
</dbReference>
<dbReference type="Pfam" id="PF06325">
    <property type="entry name" value="PrmA"/>
    <property type="match status" value="1"/>
</dbReference>
<dbReference type="PIRSF" id="PIRSF000401">
    <property type="entry name" value="RPL11_MTase"/>
    <property type="match status" value="1"/>
</dbReference>
<dbReference type="SUPFAM" id="SSF53335">
    <property type="entry name" value="S-adenosyl-L-methionine-dependent methyltransferases"/>
    <property type="match status" value="1"/>
</dbReference>
<organism>
    <name type="scientific">Histophilus somni (strain 2336)</name>
    <name type="common">Haemophilus somnus</name>
    <dbReference type="NCBI Taxonomy" id="228400"/>
    <lineage>
        <taxon>Bacteria</taxon>
        <taxon>Pseudomonadati</taxon>
        <taxon>Pseudomonadota</taxon>
        <taxon>Gammaproteobacteria</taxon>
        <taxon>Pasteurellales</taxon>
        <taxon>Pasteurellaceae</taxon>
        <taxon>Histophilus</taxon>
    </lineage>
</organism>
<gene>
    <name evidence="1" type="primary">prmA</name>
    <name type="ordered locus">HSM_1608</name>
</gene>
<name>PRMA_HISS2</name>
<accession>B0UV84</accession>
<protein>
    <recommendedName>
        <fullName evidence="1">Ribosomal protein L11 methyltransferase</fullName>
        <shortName evidence="1">L11 Mtase</shortName>
        <ecNumber evidence="1">2.1.1.-</ecNumber>
    </recommendedName>
</protein>
<feature type="chain" id="PRO_1000083353" description="Ribosomal protein L11 methyltransferase">
    <location>
        <begin position="1"/>
        <end position="296"/>
    </location>
</feature>
<feature type="binding site" evidence="1">
    <location>
        <position position="145"/>
    </location>
    <ligand>
        <name>S-adenosyl-L-methionine</name>
        <dbReference type="ChEBI" id="CHEBI:59789"/>
    </ligand>
</feature>
<feature type="binding site" evidence="1">
    <location>
        <position position="166"/>
    </location>
    <ligand>
        <name>S-adenosyl-L-methionine</name>
        <dbReference type="ChEBI" id="CHEBI:59789"/>
    </ligand>
</feature>
<feature type="binding site" evidence="1">
    <location>
        <position position="188"/>
    </location>
    <ligand>
        <name>S-adenosyl-L-methionine</name>
        <dbReference type="ChEBI" id="CHEBI:59789"/>
    </ligand>
</feature>
<feature type="binding site" evidence="1">
    <location>
        <position position="230"/>
    </location>
    <ligand>
        <name>S-adenosyl-L-methionine</name>
        <dbReference type="ChEBI" id="CHEBI:59789"/>
    </ligand>
</feature>
<reference key="1">
    <citation type="submission" date="2008-02" db="EMBL/GenBank/DDBJ databases">
        <title>Complete sequence of Haemophilus somnus 2336.</title>
        <authorList>
            <consortium name="US DOE Joint Genome Institute"/>
            <person name="Siddaramappa S."/>
            <person name="Duncan A.J."/>
            <person name="Challacombe J.F."/>
            <person name="Rainey D."/>
            <person name="Gillaspy A.F."/>
            <person name="Carson M."/>
            <person name="Gipson J."/>
            <person name="Gipson M."/>
            <person name="Bruce D."/>
            <person name="Detter J.C."/>
            <person name="Han C.S."/>
            <person name="Land M."/>
            <person name="Tapia R."/>
            <person name="Thompson L.S."/>
            <person name="Orvis J."/>
            <person name="Zaitshik J."/>
            <person name="Barnes G."/>
            <person name="Brettin T.S."/>
            <person name="Dyer D.W."/>
            <person name="Inzana T.J."/>
        </authorList>
    </citation>
    <scope>NUCLEOTIDE SEQUENCE [LARGE SCALE GENOMIC DNA]</scope>
    <source>
        <strain>2336</strain>
    </source>
</reference>
<comment type="function">
    <text evidence="1">Methylates ribosomal protein L11.</text>
</comment>
<comment type="catalytic activity">
    <reaction evidence="1">
        <text>L-lysyl-[protein] + 3 S-adenosyl-L-methionine = N(6),N(6),N(6)-trimethyl-L-lysyl-[protein] + 3 S-adenosyl-L-homocysteine + 3 H(+)</text>
        <dbReference type="Rhea" id="RHEA:54192"/>
        <dbReference type="Rhea" id="RHEA-COMP:9752"/>
        <dbReference type="Rhea" id="RHEA-COMP:13826"/>
        <dbReference type="ChEBI" id="CHEBI:15378"/>
        <dbReference type="ChEBI" id="CHEBI:29969"/>
        <dbReference type="ChEBI" id="CHEBI:57856"/>
        <dbReference type="ChEBI" id="CHEBI:59789"/>
        <dbReference type="ChEBI" id="CHEBI:61961"/>
    </reaction>
</comment>
<comment type="subcellular location">
    <subcellularLocation>
        <location evidence="1">Cytoplasm</location>
    </subcellularLocation>
</comment>
<comment type="similarity">
    <text evidence="1">Belongs to the methyltransferase superfamily. PrmA family.</text>
</comment>